<reference key="1">
    <citation type="journal article" date="2002" name="Proc. Natl. Acad. Sci. U.S.A.">
        <title>The complete genome of hyperthermophile Methanopyrus kandleri AV19 and monophyly of archaeal methanogens.</title>
        <authorList>
            <person name="Slesarev A.I."/>
            <person name="Mezhevaya K.V."/>
            <person name="Makarova K.S."/>
            <person name="Polushin N.N."/>
            <person name="Shcherbinina O.V."/>
            <person name="Shakhova V.V."/>
            <person name="Belova G.I."/>
            <person name="Aravind L."/>
            <person name="Natale D.A."/>
            <person name="Rogozin I.B."/>
            <person name="Tatusov R.L."/>
            <person name="Wolf Y.I."/>
            <person name="Stetter K.O."/>
            <person name="Malykh A.G."/>
            <person name="Koonin E.V."/>
            <person name="Kozyavkin S.A."/>
        </authorList>
    </citation>
    <scope>NUCLEOTIDE SEQUENCE [LARGE SCALE GENOMIC DNA]</scope>
    <source>
        <strain>AV19 / DSM 6324 / JCM 9639 / NBRC 100938</strain>
    </source>
</reference>
<proteinExistence type="inferred from homology"/>
<keyword id="KW-1185">Reference proteome</keyword>
<sequence length="378" mass="40330">MPNANQASAGVGALKEVLPGIRALGDLEAAEKVVKRCSGGSTVMVCVIGSTEISRVPGISAAGKTPESTFHTPAGDVELIYYDRIINAEEVPQNPVGAPSPAVITKAVVNLASIPFLTVDAGAAVKPACPYIDLGGEVARDFREGPALSEETYDRLLEFGKTLGKELTRDVDFLTVGESVPGGTTTAMAVMTALGYETSEKFASSSHDSPHDIKERVVKEGLEAQGVEPGDLDAHEAIRRFGDPMMPAVVGIIYGSRTPVLLAGGTQMAPILAYLAEEGQLDPERVFVGTTKYVVEDEDSDIESLFRQVGDYVLFSADPGFSESKFRGFRLYEEGYVKEGVGAGGAQVAAALKTKGEITPKDVLRECERVYERWMDKF</sequence>
<organism>
    <name type="scientific">Methanopyrus kandleri (strain AV19 / DSM 6324 / JCM 9639 / NBRC 100938)</name>
    <dbReference type="NCBI Taxonomy" id="190192"/>
    <lineage>
        <taxon>Archaea</taxon>
        <taxon>Methanobacteriati</taxon>
        <taxon>Methanobacteriota</taxon>
        <taxon>Methanomada group</taxon>
        <taxon>Methanopyri</taxon>
        <taxon>Methanopyrales</taxon>
        <taxon>Methanopyraceae</taxon>
        <taxon>Methanopyrus</taxon>
    </lineage>
</organism>
<protein>
    <recommendedName>
        <fullName evidence="1">UPF0284 protein MK0224</fullName>
    </recommendedName>
</protein>
<evidence type="ECO:0000255" key="1">
    <source>
        <dbReference type="HAMAP-Rule" id="MF_01086"/>
    </source>
</evidence>
<feature type="chain" id="PRO_0000151052" description="UPF0284 protein MK0224">
    <location>
        <begin position="1"/>
        <end position="378"/>
    </location>
</feature>
<gene>
    <name type="ordered locus">MK0224</name>
</gene>
<name>Y224_METKA</name>
<dbReference type="EMBL" id="AE009439">
    <property type="protein sequence ID" value="AAM01441.1"/>
    <property type="molecule type" value="Genomic_DNA"/>
</dbReference>
<dbReference type="SMR" id="Q8TYR8"/>
<dbReference type="STRING" id="190192.MK0224"/>
<dbReference type="PaxDb" id="190192-MK0224"/>
<dbReference type="EnsemblBacteria" id="AAM01441">
    <property type="protein sequence ID" value="AAM01441"/>
    <property type="gene ID" value="MK0224"/>
</dbReference>
<dbReference type="KEGG" id="mka:MK0224"/>
<dbReference type="PATRIC" id="fig|190192.8.peg.225"/>
<dbReference type="HOGENOM" id="CLU_053134_0_0_2"/>
<dbReference type="InParanoid" id="Q8TYR8"/>
<dbReference type="Proteomes" id="UP000001826">
    <property type="component" value="Chromosome"/>
</dbReference>
<dbReference type="GO" id="GO:0008939">
    <property type="term" value="F:nicotinate-nucleotide-dimethylbenzimidazole phosphoribosyltransferase activity"/>
    <property type="evidence" value="ECO:0007669"/>
    <property type="project" value="InterPro"/>
</dbReference>
<dbReference type="CDD" id="cd02439">
    <property type="entry name" value="DMB-PRT_CobT"/>
    <property type="match status" value="1"/>
</dbReference>
<dbReference type="Gene3D" id="3.40.50.10210">
    <property type="match status" value="1"/>
</dbReference>
<dbReference type="HAMAP" id="MF_01086">
    <property type="entry name" value="UPF0284"/>
    <property type="match status" value="1"/>
</dbReference>
<dbReference type="InterPro" id="IPR003200">
    <property type="entry name" value="Nict_dMeBzImd_PRibTrfase"/>
</dbReference>
<dbReference type="InterPro" id="IPR002805">
    <property type="entry name" value="Nict_dMeBzImd_PRibTrfase_arc"/>
</dbReference>
<dbReference type="InterPro" id="IPR036087">
    <property type="entry name" value="Nict_dMeBzImd_PRibTrfase_sf"/>
</dbReference>
<dbReference type="NCBIfam" id="TIGR00303">
    <property type="entry name" value="nicotinate mononucleotide-dependent phosphoribosyltransferase CobT"/>
    <property type="match status" value="1"/>
</dbReference>
<dbReference type="NCBIfam" id="NF003372">
    <property type="entry name" value="PRK04447.1-5"/>
    <property type="match status" value="1"/>
</dbReference>
<dbReference type="PANTHER" id="PTHR38811">
    <property type="match status" value="1"/>
</dbReference>
<dbReference type="PANTHER" id="PTHR38811:SF1">
    <property type="entry name" value="UPF0284 PROTEIN SLL1500"/>
    <property type="match status" value="1"/>
</dbReference>
<dbReference type="Pfam" id="PF02277">
    <property type="entry name" value="DBI_PRT"/>
    <property type="match status" value="1"/>
</dbReference>
<dbReference type="SUPFAM" id="SSF52733">
    <property type="entry name" value="Nicotinate mononucleotide:5,6-dimethylbenzimidazole phosphoribosyltransferase (CobT)"/>
    <property type="match status" value="1"/>
</dbReference>
<comment type="similarity">
    <text evidence="1">Belongs to the UPF0284 family.</text>
</comment>
<accession>Q8TYR8</accession>